<name>SCX4_TITOB</name>
<sequence>MTRFVLFISCFFLIGMIVECKDGYLMEYGGCKMSCLMKKGTFCAEECTRMKGKDGYCYAWLACYCYNMPDWVKIWNRATNKCGKRK</sequence>
<proteinExistence type="evidence at protein level"/>
<evidence type="ECO:0000255" key="1">
    <source>
        <dbReference type="PROSITE-ProRule" id="PRU01210"/>
    </source>
</evidence>
<evidence type="ECO:0000269" key="2">
    <source>
    </source>
</evidence>
<evidence type="ECO:0000269" key="3">
    <source>
    </source>
</evidence>
<evidence type="ECO:0000269" key="4">
    <source>
    </source>
</evidence>
<evidence type="ECO:0000303" key="5">
    <source>
    </source>
</evidence>
<evidence type="ECO:0000303" key="6">
    <source>
    </source>
</evidence>
<evidence type="ECO:0000303" key="7">
    <source>
    </source>
</evidence>
<evidence type="ECO:0000303" key="8">
    <source>
    </source>
</evidence>
<evidence type="ECO:0000305" key="9"/>
<evidence type="ECO:0000305" key="10">
    <source>
    </source>
</evidence>
<evidence type="ECO:0000305" key="11">
    <source>
    </source>
</evidence>
<evidence type="ECO:0000305" key="12">
    <source>
    </source>
</evidence>
<evidence type="ECO:0000312" key="13">
    <source>
        <dbReference type="EMBL" id="JAT91107.1"/>
    </source>
</evidence>
<accession>P60215</accession>
<accession>A0A1E1WVW0</accession>
<accession>H1ZZH3</accession>
<keyword id="KW-0027">Amidation</keyword>
<keyword id="KW-0903">Direct protein sequencing</keyword>
<keyword id="KW-1015">Disulfide bond</keyword>
<keyword id="KW-0872">Ion channel impairing toxin</keyword>
<keyword id="KW-0528">Neurotoxin</keyword>
<keyword id="KW-0964">Secreted</keyword>
<keyword id="KW-0732">Signal</keyword>
<keyword id="KW-0800">Toxin</keyword>
<keyword id="KW-0738">Voltage-gated sodium channel impairing toxin</keyword>
<protein>
    <recommendedName>
        <fullName evidence="7 8">Beta-toxin To4</fullName>
    </recommendedName>
    <alternativeName>
        <fullName>PT-beta* NaTx13.9</fullName>
    </alternativeName>
    <alternativeName>
        <fullName evidence="5 6">Toxin Tc54</fullName>
    </alternativeName>
</protein>
<feature type="signal peptide" evidence="2 3">
    <location>
        <begin position="1"/>
        <end position="20"/>
    </location>
</feature>
<feature type="chain" id="PRO_5000851420" description="Beta-toxin To4" evidence="10 11 12">
    <location>
        <begin position="21"/>
        <end position="82"/>
    </location>
</feature>
<feature type="domain" description="LCN-type CS-alpha/beta" evidence="1">
    <location>
        <begin position="21"/>
        <end position="83"/>
    </location>
</feature>
<feature type="modified residue" description="Cysteine amide" evidence="12">
    <location>
        <position position="82"/>
    </location>
</feature>
<feature type="disulfide bond" evidence="1">
    <location>
        <begin position="31"/>
        <end position="82"/>
    </location>
</feature>
<feature type="disulfide bond" evidence="1">
    <location>
        <begin position="35"/>
        <end position="57"/>
    </location>
</feature>
<feature type="disulfide bond" evidence="1">
    <location>
        <begin position="43"/>
        <end position="63"/>
    </location>
</feature>
<feature type="disulfide bond" evidence="1">
    <location>
        <begin position="47"/>
        <end position="65"/>
    </location>
</feature>
<feature type="sequence conflict" description="In Ref. 3; AA sequence." evidence="9" ref="3">
    <original>F</original>
    <variation>G</variation>
    <location>
        <position position="42"/>
    </location>
</feature>
<dbReference type="EMBL" id="HE585227">
    <property type="protein sequence ID" value="CCD31421.1"/>
    <property type="molecule type" value="mRNA"/>
</dbReference>
<dbReference type="EMBL" id="GEMQ01000082">
    <property type="protein sequence ID" value="JAT91107.1"/>
    <property type="molecule type" value="mRNA"/>
</dbReference>
<dbReference type="SMR" id="P60215"/>
<dbReference type="GO" id="GO:0005576">
    <property type="term" value="C:extracellular region"/>
    <property type="evidence" value="ECO:0007005"/>
    <property type="project" value="UniProtKB"/>
</dbReference>
<dbReference type="GO" id="GO:0019871">
    <property type="term" value="F:sodium channel inhibitor activity"/>
    <property type="evidence" value="ECO:0007669"/>
    <property type="project" value="InterPro"/>
</dbReference>
<dbReference type="GO" id="GO:0090729">
    <property type="term" value="F:toxin activity"/>
    <property type="evidence" value="ECO:0000250"/>
    <property type="project" value="UniProtKB"/>
</dbReference>
<dbReference type="GO" id="GO:0006952">
    <property type="term" value="P:defense response"/>
    <property type="evidence" value="ECO:0007669"/>
    <property type="project" value="InterPro"/>
</dbReference>
<dbReference type="CDD" id="cd23106">
    <property type="entry name" value="neurotoxins_LC_scorpion"/>
    <property type="match status" value="1"/>
</dbReference>
<dbReference type="FunFam" id="3.30.30.10:FF:000002">
    <property type="entry name" value="Alpha-like toxin BmK-M1"/>
    <property type="match status" value="1"/>
</dbReference>
<dbReference type="Gene3D" id="3.30.30.10">
    <property type="entry name" value="Knottin, scorpion toxin-like"/>
    <property type="match status" value="1"/>
</dbReference>
<dbReference type="InterPro" id="IPR044062">
    <property type="entry name" value="LCN-type_CS_alpha_beta_dom"/>
</dbReference>
<dbReference type="InterPro" id="IPR003614">
    <property type="entry name" value="Scorpion_toxin-like"/>
</dbReference>
<dbReference type="InterPro" id="IPR036574">
    <property type="entry name" value="Scorpion_toxin-like_sf"/>
</dbReference>
<dbReference type="InterPro" id="IPR018218">
    <property type="entry name" value="Scorpion_toxinL"/>
</dbReference>
<dbReference type="InterPro" id="IPR002061">
    <property type="entry name" value="Scorpion_toxinL/defensin"/>
</dbReference>
<dbReference type="Pfam" id="PF00537">
    <property type="entry name" value="Toxin_3"/>
    <property type="match status" value="1"/>
</dbReference>
<dbReference type="PRINTS" id="PR00285">
    <property type="entry name" value="SCORPNTOXIN"/>
</dbReference>
<dbReference type="SMART" id="SM00505">
    <property type="entry name" value="Knot1"/>
    <property type="match status" value="1"/>
</dbReference>
<dbReference type="SUPFAM" id="SSF57095">
    <property type="entry name" value="Scorpion toxin-like"/>
    <property type="match status" value="1"/>
</dbReference>
<dbReference type="PROSITE" id="PS51863">
    <property type="entry name" value="LCN_CSAB"/>
    <property type="match status" value="1"/>
</dbReference>
<reference key="1">
    <citation type="journal article" date="2012" name="PLoS ONE">
        <title>Identification and phylogenetic analysis of Tityus pachyurus and Tityus obscurus novel putative Na+-channel scorpion toxins.</title>
        <authorList>
            <person name="Guerrero-Vargas J.A."/>
            <person name="Mourao C.B."/>
            <person name="Quintero-Hernandez V."/>
            <person name="Possani L.D."/>
            <person name="Schwartz E.F."/>
        </authorList>
    </citation>
    <scope>NUCLEOTIDE SEQUENCE [MRNA]</scope>
    <scope>PROBABLE AMIDATION AT CYS-82</scope>
    <scope>NOMENCLATURE</scope>
    <source>
        <tissue>Venom gland</tissue>
    </source>
</reference>
<reference evidence="13" key="2">
    <citation type="journal article" date="2018" name="PLoS ONE">
        <title>Proteomic endorsed transcriptomic profiles of venom glands from Tityus obscurus and T. serrulatus scorpions.</title>
        <authorList>
            <person name="de Oliveira U.C."/>
            <person name="Nishiyama M.Y. Jr."/>
            <person name="Dos Santos M.B.V."/>
            <person name="Santos-da-Silva A.P."/>
            <person name="Chalkidis H.M."/>
            <person name="Souza-Imberg A."/>
            <person name="Candido D.M."/>
            <person name="Yamanouye N."/>
            <person name="Dorce V.A.C."/>
            <person name="Junqueira-de-Azevedo I.L.M."/>
        </authorList>
    </citation>
    <scope>NUCLEOTIDE SEQUENCE [MRNA]</scope>
    <source>
        <tissue>Telson</tissue>
    </source>
</reference>
<reference key="3">
    <citation type="journal article" date="2002" name="Toxicon">
        <title>Scorpion toxins from Tityus cambridgei that affect Na(+)-channels.</title>
        <authorList>
            <person name="Batista C.V.F."/>
            <person name="Zamudio F.Z."/>
            <person name="Lucas S."/>
            <person name="Fox J.W."/>
            <person name="Frau A."/>
            <person name="Prestipino G."/>
            <person name="Possani L.D."/>
        </authorList>
    </citation>
    <scope>PROTEIN SEQUENCE OF 21-48</scope>
    <scope>MASS SPECTROMETRY</scope>
    <source>
        <tissue>Venom</tissue>
    </source>
</reference>
<reference key="4">
    <citation type="journal article" date="2004" name="J. Chromatogr. B">
        <title>Proteomics of the venom from the Amazonian scorpion Tityus cambridgei and the role of prolines on mass spectrometry analysis of toxins.</title>
        <authorList>
            <person name="Batista C.V.F."/>
            <person name="del Pozo L."/>
            <person name="Zamudio F.Z."/>
            <person name="Contreras S."/>
            <person name="Becerril B."/>
            <person name="Wanke E."/>
            <person name="Possani L.D."/>
        </authorList>
    </citation>
    <scope>PROTEIN SEQUENCE OF 21-30</scope>
    <scope>SUBCELLULAR LOCATION</scope>
    <scope>MASS SPECTROMETRY</scope>
    <source>
        <tissue>Venom</tissue>
    </source>
</reference>
<reference key="5">
    <citation type="journal article" date="2017" name="Peptides">
        <title>To4, the first Tityus obscurus beta-toxin fully electrophysiologically characterized on human sodium channel isoforms.</title>
        <authorList>
            <person name="Duque H.M."/>
            <person name="Mourao C.B.F."/>
            <person name="Tibery D.V."/>
            <person name="Barbosa E.A."/>
            <person name="Campos L.A."/>
            <person name="Schwartz E.F."/>
        </authorList>
    </citation>
    <scope>FUNCTION</scope>
    <scope>PROTEIN SEQUENCE OF 56-73</scope>
    <scope>MASS SPECTROMETRY</scope>
    <source>
        <tissue>Venom</tissue>
    </source>
</reference>
<comment type="function">
    <text evidence="4">Beta toxins bind voltage-independently at site-4 of sodium channels (Nav) and shift the voltage of activation toward more negative potentials thereby affecting sodium channel activation and promoting spontaneous and repetitive firing. This toxin shows moderate inhibition of Nav1.1/SCN1A, Nav1.2/SCN2A, and Nav1.4/SCN4A, and promotes a left voltage shift on these channels. It exhibits similar potency on Nav1.2/SCN2A and Nav1.4/SCN4A (40-50% peak current inhibition at 0.5 uM), and weaker inhibition on Nav1.2 (20-30% peak current inhibition at 0.5 uM).</text>
</comment>
<comment type="subcellular location">
    <subcellularLocation>
        <location evidence="3">Secreted</location>
    </subcellularLocation>
</comment>
<comment type="tissue specificity">
    <text evidence="11">Expressed by the venom gland.</text>
</comment>
<comment type="domain">
    <text evidence="9">Has the structural arrangement of an alpha-helix connected to antiparallel beta-sheets by disulfide bonds (CS-alpha/beta).</text>
</comment>
<comment type="mass spectrometry"/>
<comment type="mass spectrometry"/>
<comment type="mass spectrometry">
    <text>Average mass.</text>
</comment>
<comment type="miscellaneous">
    <text evidence="4">Shows weak inhibition on Nav1.3/SCN3A, Nav1.5/SCN5A, Nav1.8/SCN8A, and Nav1.7/SCN9A.</text>
</comment>
<comment type="similarity">
    <text evidence="9">Belongs to the long (4 C-C) scorpion toxin superfamily. Sodium channel inhibitor family. Beta subfamily.</text>
</comment>
<organism>
    <name type="scientific">Tityus obscurus</name>
    <name type="common">Amazonian scorpion</name>
    <name type="synonym">Tityus cambridgei</name>
    <dbReference type="NCBI Taxonomy" id="1221240"/>
    <lineage>
        <taxon>Eukaryota</taxon>
        <taxon>Metazoa</taxon>
        <taxon>Ecdysozoa</taxon>
        <taxon>Arthropoda</taxon>
        <taxon>Chelicerata</taxon>
        <taxon>Arachnida</taxon>
        <taxon>Scorpiones</taxon>
        <taxon>Buthida</taxon>
        <taxon>Buthoidea</taxon>
        <taxon>Buthidae</taxon>
        <taxon>Tityus</taxon>
    </lineage>
</organism>